<protein>
    <recommendedName>
        <fullName evidence="1">S-adenosylmethionine:tRNA ribosyltransferase-isomerase</fullName>
        <ecNumber evidence="1">2.4.99.17</ecNumber>
    </recommendedName>
    <alternativeName>
        <fullName evidence="1">Queuosine biosynthesis protein QueA</fullName>
    </alternativeName>
</protein>
<sequence>MNAPIDERDFLTDSYDYALPERCIAQQPAEPRDHSRLLVVDGEAHTHRYFYDLPGLLRPGDLLVLNDTRVIPARLFGSKASGGRVEVLLLEPRAPREWLCLVKPARRLAVGARIDFDGVLAARVTELDAETGGRWLRFEGEEDFEAALERVGHTPLPPYLKTGRTRDERYQTLWASRPGAVAAPTAGLHFSGELLARLAERGIERATVTLHVGLGTFRPVQSVSVHTHRMHREWYEIPEATAIAIERTRSRGGRVLAVGTTSARALESAAQPNGLPATGPGRSELFVYPGYRWRVVEGLITNFHLPRSSLLMLVSSLVGRERLLALYREAVDKGYRFYSFGDAMLILPGAGA</sequence>
<dbReference type="EC" id="2.4.99.17" evidence="1"/>
<dbReference type="EMBL" id="BA000045">
    <property type="protein sequence ID" value="BAC91528.1"/>
    <property type="molecule type" value="Genomic_DNA"/>
</dbReference>
<dbReference type="RefSeq" id="NP_926533.1">
    <property type="nucleotide sequence ID" value="NC_005125.1"/>
</dbReference>
<dbReference type="RefSeq" id="WP_011143576.1">
    <property type="nucleotide sequence ID" value="NC_005125.1"/>
</dbReference>
<dbReference type="SMR" id="Q7NFD9"/>
<dbReference type="STRING" id="251221.gene:10761102"/>
<dbReference type="EnsemblBacteria" id="BAC91528">
    <property type="protein sequence ID" value="BAC91528"/>
    <property type="gene ID" value="BAC91528"/>
</dbReference>
<dbReference type="KEGG" id="gvi:glr3587"/>
<dbReference type="PATRIC" id="fig|251221.4.peg.3620"/>
<dbReference type="eggNOG" id="COG0809">
    <property type="taxonomic scope" value="Bacteria"/>
</dbReference>
<dbReference type="HOGENOM" id="CLU_039110_1_0_3"/>
<dbReference type="InParanoid" id="Q7NFD9"/>
<dbReference type="OrthoDB" id="9805933at2"/>
<dbReference type="PhylomeDB" id="Q7NFD9"/>
<dbReference type="UniPathway" id="UPA00392"/>
<dbReference type="Proteomes" id="UP000000557">
    <property type="component" value="Chromosome"/>
</dbReference>
<dbReference type="GO" id="GO:0005737">
    <property type="term" value="C:cytoplasm"/>
    <property type="evidence" value="ECO:0007669"/>
    <property type="project" value="UniProtKB-SubCell"/>
</dbReference>
<dbReference type="GO" id="GO:0051075">
    <property type="term" value="F:S-adenosylmethionine:tRNA ribosyltransferase-isomerase activity"/>
    <property type="evidence" value="ECO:0000318"/>
    <property type="project" value="GO_Central"/>
</dbReference>
<dbReference type="GO" id="GO:0008616">
    <property type="term" value="P:queuosine biosynthetic process"/>
    <property type="evidence" value="ECO:0000318"/>
    <property type="project" value="GO_Central"/>
</dbReference>
<dbReference type="GO" id="GO:0002099">
    <property type="term" value="P:tRNA wobble guanine modification"/>
    <property type="evidence" value="ECO:0000318"/>
    <property type="project" value="GO_Central"/>
</dbReference>
<dbReference type="FunFam" id="2.40.10.240:FF:000002">
    <property type="entry name" value="S-adenosylmethionine:tRNA ribosyltransferase-isomerase"/>
    <property type="match status" value="1"/>
</dbReference>
<dbReference type="FunFam" id="3.40.1780.10:FF:000001">
    <property type="entry name" value="S-adenosylmethionine:tRNA ribosyltransferase-isomerase"/>
    <property type="match status" value="1"/>
</dbReference>
<dbReference type="Gene3D" id="2.40.10.240">
    <property type="entry name" value="QueA-like"/>
    <property type="match status" value="1"/>
</dbReference>
<dbReference type="Gene3D" id="3.40.1780.10">
    <property type="entry name" value="QueA-like"/>
    <property type="match status" value="1"/>
</dbReference>
<dbReference type="HAMAP" id="MF_00113">
    <property type="entry name" value="QueA"/>
    <property type="match status" value="1"/>
</dbReference>
<dbReference type="InterPro" id="IPR003699">
    <property type="entry name" value="QueA"/>
</dbReference>
<dbReference type="InterPro" id="IPR042118">
    <property type="entry name" value="QueA_dom1"/>
</dbReference>
<dbReference type="InterPro" id="IPR042119">
    <property type="entry name" value="QueA_dom2"/>
</dbReference>
<dbReference type="InterPro" id="IPR036100">
    <property type="entry name" value="QueA_sf"/>
</dbReference>
<dbReference type="NCBIfam" id="NF001140">
    <property type="entry name" value="PRK00147.1"/>
    <property type="match status" value="1"/>
</dbReference>
<dbReference type="NCBIfam" id="TIGR00113">
    <property type="entry name" value="queA"/>
    <property type="match status" value="1"/>
</dbReference>
<dbReference type="PANTHER" id="PTHR30307">
    <property type="entry name" value="S-ADENOSYLMETHIONINE:TRNA RIBOSYLTRANSFERASE-ISOMERASE"/>
    <property type="match status" value="1"/>
</dbReference>
<dbReference type="PANTHER" id="PTHR30307:SF0">
    <property type="entry name" value="S-ADENOSYLMETHIONINE:TRNA RIBOSYLTRANSFERASE-ISOMERASE"/>
    <property type="match status" value="1"/>
</dbReference>
<dbReference type="Pfam" id="PF02547">
    <property type="entry name" value="Queuosine_synth"/>
    <property type="match status" value="1"/>
</dbReference>
<dbReference type="SUPFAM" id="SSF111337">
    <property type="entry name" value="QueA-like"/>
    <property type="match status" value="1"/>
</dbReference>
<organism>
    <name type="scientific">Gloeobacter violaceus (strain ATCC 29082 / PCC 7421)</name>
    <dbReference type="NCBI Taxonomy" id="251221"/>
    <lineage>
        <taxon>Bacteria</taxon>
        <taxon>Bacillati</taxon>
        <taxon>Cyanobacteriota</taxon>
        <taxon>Cyanophyceae</taxon>
        <taxon>Gloeobacterales</taxon>
        <taxon>Gloeobacteraceae</taxon>
        <taxon>Gloeobacter</taxon>
    </lineage>
</organism>
<evidence type="ECO:0000255" key="1">
    <source>
        <dbReference type="HAMAP-Rule" id="MF_00113"/>
    </source>
</evidence>
<feature type="chain" id="PRO_0000165405" description="S-adenosylmethionine:tRNA ribosyltransferase-isomerase">
    <location>
        <begin position="1"/>
        <end position="352"/>
    </location>
</feature>
<gene>
    <name evidence="1" type="primary">queA</name>
    <name type="ordered locus">glr3587</name>
</gene>
<accession>Q7NFD9</accession>
<reference key="1">
    <citation type="journal article" date="2003" name="DNA Res.">
        <title>Complete genome structure of Gloeobacter violaceus PCC 7421, a cyanobacterium that lacks thylakoids.</title>
        <authorList>
            <person name="Nakamura Y."/>
            <person name="Kaneko T."/>
            <person name="Sato S."/>
            <person name="Mimuro M."/>
            <person name="Miyashita H."/>
            <person name="Tsuchiya T."/>
            <person name="Sasamoto S."/>
            <person name="Watanabe A."/>
            <person name="Kawashima K."/>
            <person name="Kishida Y."/>
            <person name="Kiyokawa C."/>
            <person name="Kohara M."/>
            <person name="Matsumoto M."/>
            <person name="Matsuno A."/>
            <person name="Nakazaki N."/>
            <person name="Shimpo S."/>
            <person name="Takeuchi C."/>
            <person name="Yamada M."/>
            <person name="Tabata S."/>
        </authorList>
    </citation>
    <scope>NUCLEOTIDE SEQUENCE [LARGE SCALE GENOMIC DNA]</scope>
    <source>
        <strain>ATCC 29082 / PCC 7421</strain>
    </source>
</reference>
<name>QUEA_GLOVI</name>
<comment type="function">
    <text evidence="1">Transfers and isomerizes the ribose moiety from AdoMet to the 7-aminomethyl group of 7-deazaguanine (preQ1-tRNA) to give epoxyqueuosine (oQ-tRNA).</text>
</comment>
<comment type="catalytic activity">
    <reaction evidence="1">
        <text>7-aminomethyl-7-carbaguanosine(34) in tRNA + S-adenosyl-L-methionine = epoxyqueuosine(34) in tRNA + adenine + L-methionine + 2 H(+)</text>
        <dbReference type="Rhea" id="RHEA:32155"/>
        <dbReference type="Rhea" id="RHEA-COMP:10342"/>
        <dbReference type="Rhea" id="RHEA-COMP:18582"/>
        <dbReference type="ChEBI" id="CHEBI:15378"/>
        <dbReference type="ChEBI" id="CHEBI:16708"/>
        <dbReference type="ChEBI" id="CHEBI:57844"/>
        <dbReference type="ChEBI" id="CHEBI:59789"/>
        <dbReference type="ChEBI" id="CHEBI:82833"/>
        <dbReference type="ChEBI" id="CHEBI:194443"/>
        <dbReference type="EC" id="2.4.99.17"/>
    </reaction>
</comment>
<comment type="pathway">
    <text evidence="1">tRNA modification; tRNA-queuosine biosynthesis.</text>
</comment>
<comment type="subunit">
    <text evidence="1">Monomer.</text>
</comment>
<comment type="subcellular location">
    <subcellularLocation>
        <location evidence="1">Cytoplasm</location>
    </subcellularLocation>
</comment>
<comment type="similarity">
    <text evidence="1">Belongs to the QueA family.</text>
</comment>
<keyword id="KW-0963">Cytoplasm</keyword>
<keyword id="KW-0671">Queuosine biosynthesis</keyword>
<keyword id="KW-1185">Reference proteome</keyword>
<keyword id="KW-0949">S-adenosyl-L-methionine</keyword>
<keyword id="KW-0808">Transferase</keyword>
<proteinExistence type="inferred from homology"/>